<keyword id="KW-0002">3D-structure</keyword>
<keyword id="KW-1185">Reference proteome</keyword>
<keyword id="KW-1227">Viral tail protein</keyword>
<keyword id="KW-0946">Virion</keyword>
<gene>
    <name evidence="4" type="ORF">crAss001_38</name>
</gene>
<sequence>MHFNELRISQDNRFLIIDVSVDNQDYFEDVLLDSIVIDTQDTFVMNGPSDNPLYIYNVEDAYDLTYSLPEQCNCNPVRVEEDESYCFTYGTQQMKNVRLELNIQDLKVSPCSTMFFVYVKSKGTPSTDTPCGFDKDQILGTVINLQPIYKQTLKYLKEVECDCNIPKGFIDMILKLKAIELCVRTGNYPQAIKYWNKFFIKNNCKSPTSNCGCYG</sequence>
<evidence type="ECO:0000269" key="1">
    <source>
    </source>
</evidence>
<evidence type="ECO:0000303" key="2">
    <source>
    </source>
</evidence>
<evidence type="ECO:0000303" key="3">
    <source>
    </source>
</evidence>
<evidence type="ECO:0000312" key="4">
    <source>
        <dbReference type="EMBL" id="AXQ62681.1"/>
    </source>
</evidence>
<evidence type="ECO:0007829" key="5">
    <source>
        <dbReference type="PDB" id="7QOJ"/>
    </source>
</evidence>
<reference key="1">
    <citation type="journal article" date="2018" name="Nat. Commun.">
        <title>PhiCrAss001 represents the most abundant bacteriophage family in the human gut and infects Bacteroides intestinalis.</title>
        <authorList>
            <person name="Shkoporov A.N."/>
            <person name="Khokhlova E.V."/>
            <person name="Fitzgerald C.B."/>
            <person name="Stockdale S.R."/>
            <person name="Draper L.A."/>
            <person name="Ross R.P."/>
            <person name="Hill C."/>
        </authorList>
    </citation>
    <scope>NUCLEOTIDE SEQUENCE [LARGE SCALE GENOMIC DNA]</scope>
</reference>
<reference key="2">
    <citation type="journal article" date="2023" name="Nature">
        <title>Structural atlas of a human gut crassvirus.</title>
        <authorList>
            <person name="Bayfield O.W."/>
            <person name="Shkoporov A.N."/>
            <person name="Yutin N."/>
            <person name="Khokhlova E.V."/>
            <person name="Smith J.L.R."/>
            <person name="Hawkins D.E.D.P."/>
            <person name="Koonin E.V."/>
            <person name="Hill C."/>
            <person name="Antson A.A."/>
        </authorList>
    </citation>
    <scope>SUBCELLULAR LOCATION</scope>
    <scope>FUNCTION</scope>
    <scope>SUBUNIT</scope>
</reference>
<comment type="function">
    <text evidence="1">Forms the tail hub together with tail hub protein B (THB).</text>
</comment>
<comment type="subunit">
    <text evidence="1">Heterotrimer with THB (PubMed:37138077). The heterotrimers further assemble as 12 docking hubs that anchor the trimeric tail fibers (PubMed:37138077).</text>
</comment>
<comment type="subcellular location">
    <subcellularLocation>
        <location evidence="1">Virion</location>
    </subcellularLocation>
    <text evidence="1">The tail hub is assembled as a collar around the tail barrel.</text>
</comment>
<dbReference type="EMBL" id="MH675552">
    <property type="protein sequence ID" value="AXQ62681.1"/>
    <property type="molecule type" value="Genomic_DNA"/>
</dbReference>
<dbReference type="PDB" id="7QOJ">
    <property type="method" value="EM"/>
    <property type="resolution" value="3.21 A"/>
    <property type="chains" value="G/H=1-215"/>
</dbReference>
<dbReference type="PDB" id="7QOL">
    <property type="method" value="EM"/>
    <property type="resolution" value="3.33 A"/>
    <property type="chains" value="G/H/W/Z=1-215"/>
</dbReference>
<dbReference type="PDB" id="8CKB">
    <property type="method" value="EM"/>
    <property type="resolution" value="4.39 A"/>
    <property type="chains" value="O001/O002/O003/O004/O005/O006/O007/O008/O009/O010/O011/O012/O013/O014/O015/O017/O018/O019/O020/O021/O022/O023/O024/THA016=1-215"/>
</dbReference>
<dbReference type="PDBsum" id="7QOJ"/>
<dbReference type="PDBsum" id="7QOL"/>
<dbReference type="PDBsum" id="8CKB"/>
<dbReference type="EMDB" id="EMD-14092"/>
<dbReference type="EMDB" id="EMD-14094"/>
<dbReference type="SMR" id="A0A385DTH1"/>
<dbReference type="Proteomes" id="UP000262320">
    <property type="component" value="Genome"/>
</dbReference>
<dbReference type="GO" id="GO:0098015">
    <property type="term" value="C:virus tail"/>
    <property type="evidence" value="ECO:0007669"/>
    <property type="project" value="UniProtKB-KW"/>
</dbReference>
<proteinExistence type="evidence at protein level"/>
<protein>
    <recommendedName>
        <fullName evidence="3">Tail hub protein A</fullName>
        <shortName evidence="3">THA</shortName>
    </recommendedName>
    <alternativeName>
        <fullName evidence="2">Gene product 38</fullName>
        <shortName evidence="2">gp38</shortName>
    </alternativeName>
</protein>
<organism>
    <name type="scientific">Bacteroides phage crAss001</name>
    <name type="common">Bacteroides phage PhiCrAss001</name>
    <dbReference type="NCBI Taxonomy" id="2301731"/>
    <lineage>
        <taxon>Viruses</taxon>
        <taxon>Duplodnaviria</taxon>
        <taxon>Heunggongvirae</taxon>
        <taxon>Uroviricota</taxon>
        <taxon>Caudoviricetes</taxon>
        <taxon>Crassvirales</taxon>
        <taxon>Steigviridae</taxon>
        <taxon>Asinivirinae</taxon>
        <taxon>Kehishuvirus</taxon>
        <taxon>Kehishuvirus primarius</taxon>
    </lineage>
</organism>
<name>THA_BPCA1</name>
<accession>A0A385DTH1</accession>
<organismHost>
    <name type="scientific">Bacteroides intestinalis</name>
    <dbReference type="NCBI Taxonomy" id="329854"/>
</organismHost>
<feature type="chain" id="PRO_0000458034" description="Tail hub protein A">
    <location>
        <begin position="1"/>
        <end position="215"/>
    </location>
</feature>
<feature type="strand" evidence="5">
    <location>
        <begin position="2"/>
        <end position="8"/>
    </location>
</feature>
<feature type="strand" evidence="5">
    <location>
        <begin position="12"/>
        <end position="20"/>
    </location>
</feature>
<feature type="strand" evidence="5">
    <location>
        <begin position="34"/>
        <end position="38"/>
    </location>
</feature>
<feature type="turn" evidence="5">
    <location>
        <begin position="40"/>
        <end position="42"/>
    </location>
</feature>
<feature type="strand" evidence="5">
    <location>
        <begin position="45"/>
        <end position="48"/>
    </location>
</feature>
<feature type="strand" evidence="5">
    <location>
        <begin position="53"/>
        <end position="57"/>
    </location>
</feature>
<feature type="helix" evidence="5">
    <location>
        <begin position="58"/>
        <end position="61"/>
    </location>
</feature>
<feature type="helix" evidence="5">
    <location>
        <begin position="92"/>
        <end position="95"/>
    </location>
</feature>
<feature type="strand" evidence="5">
    <location>
        <begin position="96"/>
        <end position="102"/>
    </location>
</feature>
<feature type="helix" evidence="5">
    <location>
        <begin position="103"/>
        <end position="106"/>
    </location>
</feature>
<feature type="strand" evidence="5">
    <location>
        <begin position="110"/>
        <end position="112"/>
    </location>
</feature>
<feature type="strand" evidence="5">
    <location>
        <begin position="115"/>
        <end position="120"/>
    </location>
</feature>
<feature type="strand" evidence="5">
    <location>
        <begin position="137"/>
        <end position="142"/>
    </location>
</feature>
<feature type="helix" evidence="5">
    <location>
        <begin position="146"/>
        <end position="160"/>
    </location>
</feature>
<feature type="turn" evidence="5">
    <location>
        <begin position="161"/>
        <end position="163"/>
    </location>
</feature>
<feature type="helix" evidence="5">
    <location>
        <begin position="167"/>
        <end position="184"/>
    </location>
</feature>
<feature type="helix" evidence="5">
    <location>
        <begin position="188"/>
        <end position="198"/>
    </location>
</feature>